<keyword id="KW-1185">Reference proteome</keyword>
<keyword id="KW-0687">Ribonucleoprotein</keyword>
<keyword id="KW-0689">Ribosomal protein</keyword>
<keyword id="KW-0694">RNA-binding</keyword>
<keyword id="KW-0699">rRNA-binding</keyword>
<dbReference type="EMBL" id="CP001079">
    <property type="protein sequence ID" value="ACM49515.1"/>
    <property type="molecule type" value="Genomic_DNA"/>
</dbReference>
<dbReference type="RefSeq" id="WP_010265253.1">
    <property type="nucleotide sequence ID" value="NC_012026.1"/>
</dbReference>
<dbReference type="SMR" id="B9KJ53"/>
<dbReference type="STRING" id="320483.AMF_679"/>
<dbReference type="GeneID" id="7397861"/>
<dbReference type="KEGG" id="amf:AMF_679"/>
<dbReference type="eggNOG" id="COG0098">
    <property type="taxonomic scope" value="Bacteria"/>
</dbReference>
<dbReference type="HOGENOM" id="CLU_065898_2_2_5"/>
<dbReference type="Proteomes" id="UP000007307">
    <property type="component" value="Chromosome"/>
</dbReference>
<dbReference type="GO" id="GO:0015935">
    <property type="term" value="C:small ribosomal subunit"/>
    <property type="evidence" value="ECO:0007669"/>
    <property type="project" value="InterPro"/>
</dbReference>
<dbReference type="GO" id="GO:0019843">
    <property type="term" value="F:rRNA binding"/>
    <property type="evidence" value="ECO:0007669"/>
    <property type="project" value="UniProtKB-UniRule"/>
</dbReference>
<dbReference type="GO" id="GO:0003735">
    <property type="term" value="F:structural constituent of ribosome"/>
    <property type="evidence" value="ECO:0007669"/>
    <property type="project" value="InterPro"/>
</dbReference>
<dbReference type="GO" id="GO:0006412">
    <property type="term" value="P:translation"/>
    <property type="evidence" value="ECO:0007669"/>
    <property type="project" value="UniProtKB-UniRule"/>
</dbReference>
<dbReference type="FunFam" id="3.30.230.10:FF:000002">
    <property type="entry name" value="30S ribosomal protein S5"/>
    <property type="match status" value="1"/>
</dbReference>
<dbReference type="Gene3D" id="3.30.160.20">
    <property type="match status" value="1"/>
</dbReference>
<dbReference type="Gene3D" id="3.30.230.10">
    <property type="match status" value="1"/>
</dbReference>
<dbReference type="HAMAP" id="MF_01307_B">
    <property type="entry name" value="Ribosomal_uS5_B"/>
    <property type="match status" value="1"/>
</dbReference>
<dbReference type="InterPro" id="IPR020568">
    <property type="entry name" value="Ribosomal_Su5_D2-typ_SF"/>
</dbReference>
<dbReference type="InterPro" id="IPR000851">
    <property type="entry name" value="Ribosomal_uS5"/>
</dbReference>
<dbReference type="InterPro" id="IPR005712">
    <property type="entry name" value="Ribosomal_uS5_bac-type"/>
</dbReference>
<dbReference type="InterPro" id="IPR005324">
    <property type="entry name" value="Ribosomal_uS5_C"/>
</dbReference>
<dbReference type="InterPro" id="IPR013810">
    <property type="entry name" value="Ribosomal_uS5_N"/>
</dbReference>
<dbReference type="InterPro" id="IPR014721">
    <property type="entry name" value="Ribsml_uS5_D2-typ_fold_subgr"/>
</dbReference>
<dbReference type="NCBIfam" id="TIGR01021">
    <property type="entry name" value="rpsE_bact"/>
    <property type="match status" value="1"/>
</dbReference>
<dbReference type="PANTHER" id="PTHR48277">
    <property type="entry name" value="MITOCHONDRIAL RIBOSOMAL PROTEIN S5"/>
    <property type="match status" value="1"/>
</dbReference>
<dbReference type="PANTHER" id="PTHR48277:SF1">
    <property type="entry name" value="MITOCHONDRIAL RIBOSOMAL PROTEIN S5"/>
    <property type="match status" value="1"/>
</dbReference>
<dbReference type="Pfam" id="PF00333">
    <property type="entry name" value="Ribosomal_S5"/>
    <property type="match status" value="1"/>
</dbReference>
<dbReference type="Pfam" id="PF03719">
    <property type="entry name" value="Ribosomal_S5_C"/>
    <property type="match status" value="1"/>
</dbReference>
<dbReference type="SUPFAM" id="SSF54768">
    <property type="entry name" value="dsRNA-binding domain-like"/>
    <property type="match status" value="1"/>
</dbReference>
<dbReference type="SUPFAM" id="SSF54211">
    <property type="entry name" value="Ribosomal protein S5 domain 2-like"/>
    <property type="match status" value="1"/>
</dbReference>
<dbReference type="PROSITE" id="PS50881">
    <property type="entry name" value="S5_DSRBD"/>
    <property type="match status" value="1"/>
</dbReference>
<evidence type="ECO:0000255" key="1">
    <source>
        <dbReference type="HAMAP-Rule" id="MF_01307"/>
    </source>
</evidence>
<evidence type="ECO:0000305" key="2"/>
<organism>
    <name type="scientific">Anaplasma marginale (strain Florida)</name>
    <dbReference type="NCBI Taxonomy" id="320483"/>
    <lineage>
        <taxon>Bacteria</taxon>
        <taxon>Pseudomonadati</taxon>
        <taxon>Pseudomonadota</taxon>
        <taxon>Alphaproteobacteria</taxon>
        <taxon>Rickettsiales</taxon>
        <taxon>Anaplasmataceae</taxon>
        <taxon>Anaplasma</taxon>
    </lineage>
</organism>
<gene>
    <name evidence="1" type="primary">rpsE</name>
    <name type="ordered locus">AMF_679</name>
</gene>
<name>RS5_ANAMF</name>
<sequence length="174" mass="18820">MSVDKKPRAAHDSHDLSELLVSVRRVSKVVKGGRRFSFSVLVVVGDEKGRVGCGMGKHAEVSEAKIKAVNAAKKSMIRVYLRESRTLHHDVEAKFCASRVVLRSARVGTGIIAGGSVRAVFEVLGVQDVVAKIIGSSNPHSVIYAVFAAFKNMLSPKQVAGKRSRKVGEVIENR</sequence>
<accession>B9KJ53</accession>
<proteinExistence type="inferred from homology"/>
<reference key="1">
    <citation type="journal article" date="2009" name="BMC Genomics">
        <title>Conservation in the face of diversity: multistrain analysis of an intracellular bacterium.</title>
        <authorList>
            <person name="Dark M.J."/>
            <person name="Herndon D.R."/>
            <person name="Kappmeyer L.S."/>
            <person name="Gonzales M.P."/>
            <person name="Nordeen E."/>
            <person name="Palmer G.H."/>
            <person name="Knowles D.P. Jr."/>
            <person name="Brayton K.A."/>
        </authorList>
    </citation>
    <scope>NUCLEOTIDE SEQUENCE [LARGE SCALE GENOMIC DNA]</scope>
    <source>
        <strain>Florida</strain>
    </source>
</reference>
<feature type="chain" id="PRO_1000165439" description="Small ribosomal subunit protein uS5">
    <location>
        <begin position="1"/>
        <end position="174"/>
    </location>
</feature>
<feature type="domain" description="S5 DRBM" evidence="1">
    <location>
        <begin position="16"/>
        <end position="79"/>
    </location>
</feature>
<comment type="function">
    <text evidence="1">With S4 and S12 plays an important role in translational accuracy.</text>
</comment>
<comment type="function">
    <text evidence="1">Located at the back of the 30S subunit body where it stabilizes the conformation of the head with respect to the body.</text>
</comment>
<comment type="subunit">
    <text evidence="1">Part of the 30S ribosomal subunit. Contacts proteins S4 and S8.</text>
</comment>
<comment type="domain">
    <text>The N-terminal domain interacts with the head of the 30S subunit; the C-terminal domain interacts with the body and contacts protein S4. The interaction surface between S4 and S5 is involved in control of translational fidelity.</text>
</comment>
<comment type="similarity">
    <text evidence="1">Belongs to the universal ribosomal protein uS5 family.</text>
</comment>
<protein>
    <recommendedName>
        <fullName evidence="1">Small ribosomal subunit protein uS5</fullName>
    </recommendedName>
    <alternativeName>
        <fullName evidence="2">30S ribosomal protein S5</fullName>
    </alternativeName>
</protein>